<keyword id="KW-0903">Direct protein sequencing</keyword>
<keyword id="KW-0842">Viral occlusion body</keyword>
<dbReference type="EMBL" id="M10043">
    <property type="protein sequence ID" value="AAA46734.1"/>
    <property type="molecule type" value="Genomic_DNA"/>
</dbReference>
<dbReference type="PIR" id="A03802">
    <property type="entry name" value="PYNVSM"/>
</dbReference>
<dbReference type="PIR" id="A26276">
    <property type="entry name" value="PYNVNV"/>
</dbReference>
<dbReference type="SMR" id="P03237"/>
<dbReference type="GO" id="GO:0039679">
    <property type="term" value="C:viral occlusion body"/>
    <property type="evidence" value="ECO:0007669"/>
    <property type="project" value="UniProtKB-KW"/>
</dbReference>
<dbReference type="GO" id="GO:0005198">
    <property type="term" value="F:structural molecule activity"/>
    <property type="evidence" value="ECO:0007669"/>
    <property type="project" value="InterPro"/>
</dbReference>
<dbReference type="InterPro" id="IPR001746">
    <property type="entry name" value="Polyhedrin"/>
</dbReference>
<dbReference type="Pfam" id="PF00738">
    <property type="entry name" value="Polyhedrin"/>
    <property type="match status" value="1"/>
</dbReference>
<accession>P03237</accession>
<organism>
    <name type="scientific">Bombyx mori nuclear polyhedrosis virus</name>
    <name type="common">BmNPV</name>
    <dbReference type="NCBI Taxonomy" id="271108"/>
    <lineage>
        <taxon>Viruses</taxon>
        <taxon>Viruses incertae sedis</taxon>
        <taxon>Naldaviricetes</taxon>
        <taxon>Lefavirales</taxon>
        <taxon>Baculoviridae</taxon>
        <taxon>Alphabaculovirus</taxon>
        <taxon>Alphabaculovirus bomori</taxon>
    </lineage>
</organism>
<sequence>MPNYSYNPTIGRTYVYDNKYYKNLGGLIKNAKRKKHLIEHEKEEKQWDLLDNYMVAEDPFLGPGKNQKLTLFKEVRNVKPDTMKLIVNWSGKEFLRETWTRFVEDSFPIVNDQEVMDVYLVANLKPTRPNRCYKFLAQHALRWDEDYVPHEVIRIMEPSYVGMNNEYRISLAKKGGGCPIMNIHSEYTNSFESFVNRVIWENFYKPIVYIGTDSAEEEEILIEVSLVFKIKEFAPDAPLFTGPAY</sequence>
<evidence type="ECO:0000269" key="1">
    <source ref="2"/>
</evidence>
<evidence type="ECO:0000269" key="2">
    <source ref="3"/>
</evidence>
<evidence type="ECO:0000305" key="3"/>
<protein>
    <recommendedName>
        <fullName>Polyhedrin</fullName>
    </recommendedName>
    <alternativeName>
        <fullName>Major occlusion protein</fullName>
    </alternativeName>
</protein>
<proteinExistence type="evidence at protein level"/>
<feature type="initiator methionine" description="Removed; by host" evidence="1 2">
    <location>
        <position position="1"/>
    </location>
</feature>
<feature type="chain" id="PRO_0000217247" description="Polyhedrin">
    <location>
        <begin position="2"/>
        <end position="245"/>
    </location>
</feature>
<feature type="sequence conflict" description="In Ref. 2; AA sequence and 3; AA sequence." evidence="3" ref="2 3">
    <original>HE</original>
    <variation>EH</variation>
    <location>
        <begin position="40"/>
        <end position="41"/>
    </location>
</feature>
<feature type="sequence conflict" description="In Ref. 3; AA sequence." evidence="3" ref="3">
    <original>NDQE</original>
    <variation>BZED</variation>
    <location>
        <begin position="111"/>
        <end position="114"/>
    </location>
</feature>
<feature type="sequence conflict" description="In Ref. 2; AA sequence and 3; AA sequence." evidence="3" ref="2 3">
    <original>V</original>
    <variation>VV</variation>
    <location>
        <position position="115"/>
    </location>
</feature>
<feature type="sequence conflict" description="In Ref. 2; AA sequence." evidence="3" ref="2">
    <original>WDE</original>
    <variation>EN</variation>
    <location>
        <begin position="143"/>
        <end position="145"/>
    </location>
</feature>
<feature type="sequence conflict" description="In Ref. 3; AA sequence." evidence="3" ref="3">
    <original>WDE</original>
    <variation>QN</variation>
    <location>
        <begin position="143"/>
        <end position="145"/>
    </location>
</feature>
<feature type="sequence conflict" description="In Ref. 3; AA sequence." evidence="3" ref="3">
    <original>GCP</original>
    <variation>PGC</variation>
    <location>
        <begin position="177"/>
        <end position="179"/>
    </location>
</feature>
<feature type="sequence conflict" description="In Ref. 2; AA sequence." evidence="3" ref="2">
    <original>TDSAEEEE</original>
    <variation>BTSZA</variation>
    <location>
        <begin position="212"/>
        <end position="219"/>
    </location>
</feature>
<feature type="sequence conflict" description="In Ref. 2; AA sequence." evidence="3" ref="2">
    <original>SA</original>
    <variation>AS</variation>
    <location>
        <begin position="214"/>
        <end position="215"/>
    </location>
</feature>
<feature type="sequence conflict" description="In Ref. 2; AA sequence." evidence="3" ref="2">
    <original>E</original>
    <variation>Q</variation>
    <location>
        <position position="219"/>
    </location>
</feature>
<comment type="function">
    <text>Major component of the virus occlusion bodies, which are large proteinaceous structures (polyhedra), that protect the virus from the outside environment for extended periods until they are ingested by insect larvae.</text>
</comment>
<comment type="similarity">
    <text evidence="3">Belongs to the polyhedrin family.</text>
</comment>
<name>PYHD_NPVBM</name>
<organismHost>
    <name type="scientific">Bombyx mori</name>
    <name type="common">Silk moth</name>
    <dbReference type="NCBI Taxonomy" id="7091"/>
</organismHost>
<gene>
    <name type="primary">PH</name>
    <name type="synonym">P29</name>
    <name type="synonym">POLH</name>
</gene>
<reference key="1">
    <citation type="journal article" date="1985" name="J. Virol.">
        <title>Polyhedrin gene of Bombyx mori nuclear polyhedrosis virus.</title>
        <authorList>
            <person name="Iatrou K."/>
            <person name="Ito K."/>
            <person name="Witkiewicz H."/>
        </authorList>
    </citation>
    <scope>NUCLEOTIDE SEQUENCE [GENOMIC DNA]</scope>
</reference>
<reference key="2">
    <citation type="journal article" date="1978" name="Bioorg. Khim.">
        <title>Reconstruction of the polypeptide chain of the protein of the inclusion bodies of silkworm nuclear polyhedrosis virus. III. Complete amino acid sequence.</title>
        <authorList>
            <person name="Kozlov E.A."/>
            <person name="Levitina T.L."/>
            <person name="Katsman M.S."/>
            <person name="Gusak N.M."/>
            <person name="Serebryany S.B."/>
        </authorList>
    </citation>
    <scope>PROTEIN SEQUENCE OF 2-245</scope>
</reference>
<reference key="3">
    <citation type="journal article" date="1977" name="J. Invertebr. Pathol.">
        <title>The primary structure of the polyhedral protein of nuclear polyhedrosis virus (NPV) of Bombyx mori.</title>
        <authorList>
            <person name="Serebryani S.B."/>
            <person name="Levitina T.L."/>
            <person name="Kautsman M.L."/>
            <person name="Radavski Y.L."/>
            <person name="Gusak N.M."/>
            <person name="Ovander M.N."/>
            <person name="Sucharenko N.V."/>
            <person name="Kozlov E.A."/>
        </authorList>
    </citation>
    <scope>PROTEIN SEQUENCE OF 2-245</scope>
</reference>